<name>RL14_STAAT</name>
<dbReference type="EMBL" id="CP000730">
    <property type="protein sequence ID" value="ABX30224.1"/>
    <property type="molecule type" value="Genomic_DNA"/>
</dbReference>
<dbReference type="RefSeq" id="WP_000615921.1">
    <property type="nucleotide sequence ID" value="NC_010079.1"/>
</dbReference>
<dbReference type="SMR" id="A8Z347"/>
<dbReference type="GeneID" id="98346552"/>
<dbReference type="KEGG" id="sax:USA300HOU_2231"/>
<dbReference type="HOGENOM" id="CLU_095071_2_1_9"/>
<dbReference type="GO" id="GO:0022625">
    <property type="term" value="C:cytosolic large ribosomal subunit"/>
    <property type="evidence" value="ECO:0007669"/>
    <property type="project" value="TreeGrafter"/>
</dbReference>
<dbReference type="GO" id="GO:0070180">
    <property type="term" value="F:large ribosomal subunit rRNA binding"/>
    <property type="evidence" value="ECO:0007669"/>
    <property type="project" value="TreeGrafter"/>
</dbReference>
<dbReference type="GO" id="GO:0003735">
    <property type="term" value="F:structural constituent of ribosome"/>
    <property type="evidence" value="ECO:0007669"/>
    <property type="project" value="InterPro"/>
</dbReference>
<dbReference type="GO" id="GO:0006412">
    <property type="term" value="P:translation"/>
    <property type="evidence" value="ECO:0007669"/>
    <property type="project" value="UniProtKB-UniRule"/>
</dbReference>
<dbReference type="CDD" id="cd00337">
    <property type="entry name" value="Ribosomal_uL14"/>
    <property type="match status" value="1"/>
</dbReference>
<dbReference type="FunFam" id="2.40.150.20:FF:000001">
    <property type="entry name" value="50S ribosomal protein L14"/>
    <property type="match status" value="1"/>
</dbReference>
<dbReference type="Gene3D" id="2.40.150.20">
    <property type="entry name" value="Ribosomal protein L14"/>
    <property type="match status" value="1"/>
</dbReference>
<dbReference type="HAMAP" id="MF_01367">
    <property type="entry name" value="Ribosomal_uL14"/>
    <property type="match status" value="1"/>
</dbReference>
<dbReference type="InterPro" id="IPR000218">
    <property type="entry name" value="Ribosomal_uL14"/>
</dbReference>
<dbReference type="InterPro" id="IPR005745">
    <property type="entry name" value="Ribosomal_uL14_bac-type"/>
</dbReference>
<dbReference type="InterPro" id="IPR019972">
    <property type="entry name" value="Ribosomal_uL14_CS"/>
</dbReference>
<dbReference type="InterPro" id="IPR036853">
    <property type="entry name" value="Ribosomal_uL14_sf"/>
</dbReference>
<dbReference type="NCBIfam" id="TIGR01067">
    <property type="entry name" value="rplN_bact"/>
    <property type="match status" value="1"/>
</dbReference>
<dbReference type="PANTHER" id="PTHR11761">
    <property type="entry name" value="50S/60S RIBOSOMAL PROTEIN L14/L23"/>
    <property type="match status" value="1"/>
</dbReference>
<dbReference type="PANTHER" id="PTHR11761:SF3">
    <property type="entry name" value="LARGE RIBOSOMAL SUBUNIT PROTEIN UL14M"/>
    <property type="match status" value="1"/>
</dbReference>
<dbReference type="Pfam" id="PF00238">
    <property type="entry name" value="Ribosomal_L14"/>
    <property type="match status" value="1"/>
</dbReference>
<dbReference type="SMART" id="SM01374">
    <property type="entry name" value="Ribosomal_L14"/>
    <property type="match status" value="1"/>
</dbReference>
<dbReference type="SUPFAM" id="SSF50193">
    <property type="entry name" value="Ribosomal protein L14"/>
    <property type="match status" value="1"/>
</dbReference>
<dbReference type="PROSITE" id="PS00049">
    <property type="entry name" value="RIBOSOMAL_L14"/>
    <property type="match status" value="1"/>
</dbReference>
<reference key="1">
    <citation type="journal article" date="2007" name="BMC Microbiol.">
        <title>Subtle genetic changes enhance virulence of methicillin resistant and sensitive Staphylococcus aureus.</title>
        <authorList>
            <person name="Highlander S.K."/>
            <person name="Hulten K.G."/>
            <person name="Qin X."/>
            <person name="Jiang H."/>
            <person name="Yerrapragada S."/>
            <person name="Mason E.O. Jr."/>
            <person name="Shang Y."/>
            <person name="Williams T.M."/>
            <person name="Fortunov R.M."/>
            <person name="Liu Y."/>
            <person name="Igboeli O."/>
            <person name="Petrosino J."/>
            <person name="Tirumalai M."/>
            <person name="Uzman A."/>
            <person name="Fox G.E."/>
            <person name="Cardenas A.M."/>
            <person name="Muzny D.M."/>
            <person name="Hemphill L."/>
            <person name="Ding Y."/>
            <person name="Dugan S."/>
            <person name="Blyth P.R."/>
            <person name="Buhay C.J."/>
            <person name="Dinh H.H."/>
            <person name="Hawes A.C."/>
            <person name="Holder M."/>
            <person name="Kovar C.L."/>
            <person name="Lee S.L."/>
            <person name="Liu W."/>
            <person name="Nazareth L.V."/>
            <person name="Wang Q."/>
            <person name="Zhou J."/>
            <person name="Kaplan S.L."/>
            <person name="Weinstock G.M."/>
        </authorList>
    </citation>
    <scope>NUCLEOTIDE SEQUENCE [LARGE SCALE GENOMIC DNA]</scope>
    <source>
        <strain>USA300 / TCH1516</strain>
    </source>
</reference>
<accession>A8Z347</accession>
<sequence>MIQQETRLKVADNSGAREVLTIKVLGGSGRKTANIGDVIVCTVKNATPGGVVKKGDVVKAVIVRTKSGVRRNDGSYIKFDENACVIIRDDKGPRGTRIFGPVARELREGNFMKIVSLAPEVL</sequence>
<feature type="chain" id="PRO_1000087153" description="Large ribosomal subunit protein uL14">
    <location>
        <begin position="1"/>
        <end position="122"/>
    </location>
</feature>
<keyword id="KW-0687">Ribonucleoprotein</keyword>
<keyword id="KW-0689">Ribosomal protein</keyword>
<keyword id="KW-0694">RNA-binding</keyword>
<keyword id="KW-0699">rRNA-binding</keyword>
<proteinExistence type="inferred from homology"/>
<gene>
    <name evidence="1" type="primary">rplN</name>
    <name type="ordered locus">USA300HOU_2231</name>
</gene>
<comment type="function">
    <text evidence="1">Binds to 23S rRNA. Forms part of two intersubunit bridges in the 70S ribosome.</text>
</comment>
<comment type="subunit">
    <text evidence="1">Part of the 50S ribosomal subunit. Forms a cluster with proteins L3 and L19. In the 70S ribosome, L14 and L19 interact and together make contacts with the 16S rRNA in bridges B5 and B8.</text>
</comment>
<comment type="similarity">
    <text evidence="1">Belongs to the universal ribosomal protein uL14 family.</text>
</comment>
<protein>
    <recommendedName>
        <fullName evidence="1">Large ribosomal subunit protein uL14</fullName>
    </recommendedName>
    <alternativeName>
        <fullName evidence="2">50S ribosomal protein L14</fullName>
    </alternativeName>
</protein>
<evidence type="ECO:0000255" key="1">
    <source>
        <dbReference type="HAMAP-Rule" id="MF_01367"/>
    </source>
</evidence>
<evidence type="ECO:0000305" key="2"/>
<organism>
    <name type="scientific">Staphylococcus aureus (strain USA300 / TCH1516)</name>
    <dbReference type="NCBI Taxonomy" id="451516"/>
    <lineage>
        <taxon>Bacteria</taxon>
        <taxon>Bacillati</taxon>
        <taxon>Bacillota</taxon>
        <taxon>Bacilli</taxon>
        <taxon>Bacillales</taxon>
        <taxon>Staphylococcaceae</taxon>
        <taxon>Staphylococcus</taxon>
    </lineage>
</organism>